<keyword id="KW-1003">Cell membrane</keyword>
<keyword id="KW-0968">Cytoplasmic vesicle</keyword>
<keyword id="KW-0967">Endosome</keyword>
<keyword id="KW-0342">GTP-binding</keyword>
<keyword id="KW-0378">Hydrolase</keyword>
<keyword id="KW-0449">Lipoprotein</keyword>
<keyword id="KW-0460">Magnesium</keyword>
<keyword id="KW-0472">Membrane</keyword>
<keyword id="KW-0479">Metal-binding</keyword>
<keyword id="KW-0488">Methylation</keyword>
<keyword id="KW-0547">Nucleotide-binding</keyword>
<keyword id="KW-0597">Phosphoprotein</keyword>
<keyword id="KW-0636">Prenylation</keyword>
<keyword id="KW-0653">Protein transport</keyword>
<keyword id="KW-1185">Reference proteome</keyword>
<keyword id="KW-0813">Transport</keyword>
<comment type="function">
    <text evidence="2 5 8">The small GTPases Rab are key regulators of intracellular membrane trafficking, from the formation of transport vesicles to their fusion with membranes. Rabs cycle between an inactive GDP-bound form and an active GTP-bound form that is able to recruit to membranes different sets of downstream effectors directly responsible for vesicle formation, movement, tethering and fusion (By similarity). RAB8B may be involved in polarized vesicular trafficking and neurotransmitter release (By similarity). May participate in cell junction dynamics in Sertoli cells (PubMed:12639940). May also participate in the export of a subset of neosynthesized proteins through a Rab8-Rab10-Rab11-dependent endososomal export route (By similarity).</text>
</comment>
<comment type="catalytic activity">
    <reaction evidence="2">
        <text>GTP + H2O = GDP + phosphate + H(+)</text>
        <dbReference type="Rhea" id="RHEA:19669"/>
        <dbReference type="ChEBI" id="CHEBI:15377"/>
        <dbReference type="ChEBI" id="CHEBI:15378"/>
        <dbReference type="ChEBI" id="CHEBI:37565"/>
        <dbReference type="ChEBI" id="CHEBI:43474"/>
        <dbReference type="ChEBI" id="CHEBI:58189"/>
        <dbReference type="EC" id="3.6.5.2"/>
    </reaction>
    <physiologicalReaction direction="left-to-right" evidence="2">
        <dbReference type="Rhea" id="RHEA:19670"/>
    </physiologicalReaction>
</comment>
<comment type="cofactor">
    <cofactor evidence="2">
        <name>Mg(2+)</name>
        <dbReference type="ChEBI" id="CHEBI:18420"/>
    </cofactor>
</comment>
<comment type="activity regulation">
    <text evidence="5">Regulated by guanine nucleotide exchange factors (GEFs) including RAB3IP/RABIN8 which promotes the exchange of bound GDP for free GTP. Regulated by GTPase activating proteins (GAPs) which increase the GTP hydrolysis activity. Inhibited by GDP dissociation inhibitors (GDIs).</text>
</comment>
<comment type="subunit">
    <text evidence="3 5 7 8">Associated with actin, delta-catenin and alpha and beta tubulins (PubMed:12639940). Interacts with OTOF (By similarity). Interacts with PEX5R (PubMed:11278749). Interacts with RAB3IP (By similarity). Interacts with VIM (PubMed:12639940). Interacts with CDH1 (PubMed:12639940). Interacts with MICALL2 (By similarity). Interacts with GDI1, GDI2 and CHM; phosphorylation at Thr-72 disrupts these interactions (By similarity). Interacts with MICAL1 (By similarity).</text>
</comment>
<comment type="subcellular location">
    <subcellularLocation>
        <location evidence="9">Cell membrane</location>
        <topology evidence="9">Lipid-anchor</topology>
        <orientation evidence="9">Cytoplasmic side</orientation>
    </subcellularLocation>
    <subcellularLocation>
        <location evidence="1">Cytoplasmic vesicle</location>
        <location evidence="1">Phagosome membrane</location>
        <topology evidence="1">Lipid-anchor</topology>
        <orientation evidence="1">Cytoplasmic side</orientation>
    </subcellularLocation>
    <subcellularLocation>
        <location evidence="5">Endosome membrane</location>
    </subcellularLocation>
    <text evidence="1">Recruited to phagosomes containing S.aureus or Mycobacterium (By similarity). Colocalizes with CDH1 in the basal compartment.</text>
</comment>
<comment type="tissue specificity">
    <text evidence="8">Hight levels of expression in the spleen, heart, kidney, testis and brain. Expression increases in Sertoli and germ cells during their maturation.</text>
</comment>
<comment type="developmental stage">
    <text evidence="8">Localizes in the basal compartment associating with spermatocytes in all stages of the spermatogenic cycle. Detected at the site of elongate spermatids in stages XII-XIV in addition to being found in the basal compartment in these stages.</text>
</comment>
<comment type="domain">
    <text evidence="4">Switch 1, switch 2 and the interswitch regions are characteristic of Rab GTPases and mediate the interactions with Rab downstream effectors. The switch regions undergo conformational changes upon nucleotide binding which drives interaction with specific sets of effector proteins, with most effectors only binding to GTP-bound Rab.</text>
</comment>
<comment type="PTM">
    <text evidence="5">Phosphorylation of Thr-72 in the switch II region by LRRK2 prevents the association of RAB regulatory proteins, including CHM and RAB GDP dissociation inhibitors GDI1 and GDI2.</text>
</comment>
<comment type="similarity">
    <text evidence="9">Belongs to the small GTPase superfamily. Rab family.</text>
</comment>
<gene>
    <name evidence="10" type="primary">Rab8b</name>
</gene>
<evidence type="ECO:0000250" key="1"/>
<evidence type="ECO:0000250" key="2">
    <source>
        <dbReference type="UniProtKB" id="P61006"/>
    </source>
</evidence>
<evidence type="ECO:0000250" key="3">
    <source>
        <dbReference type="UniProtKB" id="P61028"/>
    </source>
</evidence>
<evidence type="ECO:0000250" key="4">
    <source>
        <dbReference type="UniProtKB" id="P62820"/>
    </source>
</evidence>
<evidence type="ECO:0000250" key="5">
    <source>
        <dbReference type="UniProtKB" id="Q92930"/>
    </source>
</evidence>
<evidence type="ECO:0000255" key="6"/>
<evidence type="ECO:0000269" key="7">
    <source>
    </source>
</evidence>
<evidence type="ECO:0000269" key="8">
    <source>
    </source>
</evidence>
<evidence type="ECO:0000305" key="9"/>
<evidence type="ECO:0000312" key="10">
    <source>
        <dbReference type="RGD" id="628764"/>
    </source>
</evidence>
<organism>
    <name type="scientific">Rattus norvegicus</name>
    <name type="common">Rat</name>
    <dbReference type="NCBI Taxonomy" id="10116"/>
    <lineage>
        <taxon>Eukaryota</taxon>
        <taxon>Metazoa</taxon>
        <taxon>Chordata</taxon>
        <taxon>Craniata</taxon>
        <taxon>Vertebrata</taxon>
        <taxon>Euteleostomi</taxon>
        <taxon>Mammalia</taxon>
        <taxon>Eutheria</taxon>
        <taxon>Euarchontoglires</taxon>
        <taxon>Glires</taxon>
        <taxon>Rodentia</taxon>
        <taxon>Myomorpha</taxon>
        <taxon>Muroidea</taxon>
        <taxon>Muridae</taxon>
        <taxon>Murinae</taxon>
        <taxon>Rattus</taxon>
    </lineage>
</organism>
<feature type="chain" id="PRO_0000121136" description="Ras-related protein Rab-8B">
    <location>
        <begin position="1"/>
        <end position="204"/>
    </location>
</feature>
<feature type="propeptide" id="PRO_0000370803" description="Removed in mature form" evidence="6">
    <location>
        <begin position="205"/>
        <end position="207"/>
    </location>
</feature>
<feature type="short sequence motif" description="Switch 1" evidence="4">
    <location>
        <begin position="31"/>
        <end position="45"/>
    </location>
</feature>
<feature type="short sequence motif" description="Switch 2" evidence="4">
    <location>
        <begin position="63"/>
        <end position="80"/>
    </location>
</feature>
<feature type="binding site" evidence="2">
    <location>
        <position position="17"/>
    </location>
    <ligand>
        <name>GTP</name>
        <dbReference type="ChEBI" id="CHEBI:37565"/>
    </ligand>
</feature>
<feature type="binding site" evidence="2">
    <location>
        <position position="18"/>
    </location>
    <ligand>
        <name>GTP</name>
        <dbReference type="ChEBI" id="CHEBI:37565"/>
    </ligand>
</feature>
<feature type="binding site" evidence="2">
    <location>
        <position position="19"/>
    </location>
    <ligand>
        <name>GTP</name>
        <dbReference type="ChEBI" id="CHEBI:37565"/>
    </ligand>
</feature>
<feature type="binding site" evidence="2">
    <location>
        <position position="20"/>
    </location>
    <ligand>
        <name>GTP</name>
        <dbReference type="ChEBI" id="CHEBI:37565"/>
    </ligand>
</feature>
<feature type="binding site" evidence="2">
    <location>
        <position position="21"/>
    </location>
    <ligand>
        <name>GTP</name>
        <dbReference type="ChEBI" id="CHEBI:37565"/>
    </ligand>
</feature>
<feature type="binding site" evidence="2">
    <location>
        <position position="22"/>
    </location>
    <ligand>
        <name>GTP</name>
        <dbReference type="ChEBI" id="CHEBI:37565"/>
    </ligand>
</feature>
<feature type="binding site" evidence="2">
    <location>
        <position position="22"/>
    </location>
    <ligand>
        <name>Mg(2+)</name>
        <dbReference type="ChEBI" id="CHEBI:18420"/>
    </ligand>
</feature>
<feature type="binding site" evidence="2">
    <location>
        <position position="23"/>
    </location>
    <ligand>
        <name>GTP</name>
        <dbReference type="ChEBI" id="CHEBI:37565"/>
    </ligand>
</feature>
<feature type="binding site" evidence="2">
    <location>
        <position position="35"/>
    </location>
    <ligand>
        <name>GTP</name>
        <dbReference type="ChEBI" id="CHEBI:37565"/>
    </ligand>
</feature>
<feature type="binding site" evidence="2">
    <location>
        <position position="39"/>
    </location>
    <ligand>
        <name>GTP</name>
        <dbReference type="ChEBI" id="CHEBI:37565"/>
    </ligand>
</feature>
<feature type="binding site" evidence="2">
    <location>
        <position position="40"/>
    </location>
    <ligand>
        <name>GTP</name>
        <dbReference type="ChEBI" id="CHEBI:37565"/>
    </ligand>
</feature>
<feature type="binding site" evidence="2">
    <location>
        <position position="40"/>
    </location>
    <ligand>
        <name>Mg(2+)</name>
        <dbReference type="ChEBI" id="CHEBI:18420"/>
    </ligand>
</feature>
<feature type="binding site" evidence="2">
    <location>
        <position position="63"/>
    </location>
    <ligand>
        <name>Mg(2+)</name>
        <dbReference type="ChEBI" id="CHEBI:18420"/>
    </ligand>
</feature>
<feature type="binding site" evidence="2">
    <location>
        <position position="66"/>
    </location>
    <ligand>
        <name>GTP</name>
        <dbReference type="ChEBI" id="CHEBI:37565"/>
    </ligand>
</feature>
<feature type="binding site" evidence="2">
    <location>
        <position position="121"/>
    </location>
    <ligand>
        <name>GTP</name>
        <dbReference type="ChEBI" id="CHEBI:37565"/>
    </ligand>
</feature>
<feature type="binding site" evidence="2">
    <location>
        <position position="122"/>
    </location>
    <ligand>
        <name>GTP</name>
        <dbReference type="ChEBI" id="CHEBI:37565"/>
    </ligand>
</feature>
<feature type="binding site" evidence="2">
    <location>
        <position position="124"/>
    </location>
    <ligand>
        <name>GTP</name>
        <dbReference type="ChEBI" id="CHEBI:37565"/>
    </ligand>
</feature>
<feature type="binding site" evidence="2">
    <location>
        <position position="152"/>
    </location>
    <ligand>
        <name>GTP</name>
        <dbReference type="ChEBI" id="CHEBI:37565"/>
    </ligand>
</feature>
<feature type="binding site" evidence="2">
    <location>
        <position position="153"/>
    </location>
    <ligand>
        <name>GTP</name>
        <dbReference type="ChEBI" id="CHEBI:37565"/>
    </ligand>
</feature>
<feature type="modified residue" description="Phosphothreonine" evidence="5">
    <location>
        <position position="72"/>
    </location>
</feature>
<feature type="modified residue" description="Phosphoserine" evidence="3">
    <location>
        <position position="180"/>
    </location>
</feature>
<feature type="modified residue" description="Phosphoserine" evidence="3">
    <location>
        <position position="183"/>
    </location>
</feature>
<feature type="modified residue" description="Cysteine methyl ester" evidence="6">
    <location>
        <position position="204"/>
    </location>
</feature>
<feature type="lipid moiety-binding region" description="S-geranylgeranyl cysteine" evidence="1">
    <location>
        <position position="204"/>
    </location>
</feature>
<protein>
    <recommendedName>
        <fullName>Ras-related protein Rab-8B</fullName>
        <ecNumber evidence="2">3.6.5.2</ecNumber>
    </recommendedName>
</protein>
<reference key="1">
    <citation type="journal article" date="1996" name="J. Cell Sci.">
        <title>Identification of a novel member of the Rab8 family from the rat basophilic leukaemia cell line, RBL.2H3.</title>
        <authorList>
            <person name="Armstrong J."/>
            <person name="Thompson N."/>
            <person name="Squire J.H."/>
            <person name="Smith J."/>
            <person name="Hayes B."/>
            <person name="Solari R."/>
        </authorList>
    </citation>
    <scope>NUCLEOTIDE SEQUENCE [MRNA]</scope>
</reference>
<reference key="2">
    <citation type="journal article" date="2001" name="J. Biol. Chem.">
        <title>Rab8b and its interacting partner TRIP8b are involved in regulated secretion in AtT20 cells.</title>
        <authorList>
            <person name="Chen S."/>
            <person name="Liang M.C."/>
            <person name="Chia J.N."/>
            <person name="Ngsee J.K."/>
            <person name="Ting A.E."/>
        </authorList>
    </citation>
    <scope>INTERACTION WITH PEX5R</scope>
</reference>
<reference key="3">
    <citation type="journal article" date="2003" name="Endocrinology">
        <title>Rab8B GTPase and junction dynamics in the testis.</title>
        <authorList>
            <person name="Lau A.S."/>
            <person name="Mruk D.D."/>
        </authorList>
    </citation>
    <scope>FUNCTION IN CELL JUNCTION DYNAMICS</scope>
    <scope>ASSOCIATION WITH ACTIN; DELTA-CATENIN AND ALPHA AND BETA TUBULINS</scope>
    <scope>INTERACTION WITH VIM AND CDH1</scope>
    <scope>TISSUE SPECIFICITY</scope>
    <scope>DEVELOPMENTAL STAGE</scope>
</reference>
<name>RAB8B_RAT</name>
<accession>P70550</accession>
<dbReference type="EC" id="3.6.5.2" evidence="2"/>
<dbReference type="EMBL" id="U53475">
    <property type="protein sequence ID" value="AAA99782.1"/>
    <property type="molecule type" value="mRNA"/>
</dbReference>
<dbReference type="RefSeq" id="NP_695229.1">
    <property type="nucleotide sequence ID" value="NM_153317.3"/>
</dbReference>
<dbReference type="SMR" id="P70550"/>
<dbReference type="BioGRID" id="251776">
    <property type="interactions" value="1"/>
</dbReference>
<dbReference type="FunCoup" id="P70550">
    <property type="interactions" value="3936"/>
</dbReference>
<dbReference type="IntAct" id="P70550">
    <property type="interactions" value="3"/>
</dbReference>
<dbReference type="STRING" id="10116.ENSRNOP00000024287"/>
<dbReference type="iPTMnet" id="P70550"/>
<dbReference type="PhosphoSitePlus" id="P70550"/>
<dbReference type="jPOST" id="P70550"/>
<dbReference type="PaxDb" id="10116-ENSRNOP00000024287"/>
<dbReference type="Ensembl" id="ENSRNOT00000024286.5">
    <property type="protein sequence ID" value="ENSRNOP00000024287.2"/>
    <property type="gene ID" value="ENSRNOG00000018009.7"/>
</dbReference>
<dbReference type="GeneID" id="266688"/>
<dbReference type="KEGG" id="rno:266688"/>
<dbReference type="UCSC" id="RGD:628764">
    <property type="organism name" value="rat"/>
</dbReference>
<dbReference type="AGR" id="RGD:628764"/>
<dbReference type="CTD" id="51762"/>
<dbReference type="RGD" id="628764">
    <property type="gene designation" value="Rab8b"/>
</dbReference>
<dbReference type="eggNOG" id="KOG0078">
    <property type="taxonomic scope" value="Eukaryota"/>
</dbReference>
<dbReference type="GeneTree" id="ENSGT00940000155363"/>
<dbReference type="HOGENOM" id="CLU_041217_23_1_1"/>
<dbReference type="InParanoid" id="P70550"/>
<dbReference type="OMA" id="FDWLIKI"/>
<dbReference type="OrthoDB" id="9989112at2759"/>
<dbReference type="PhylomeDB" id="P70550"/>
<dbReference type="TreeFam" id="TF314097"/>
<dbReference type="Reactome" id="R-RNO-8854214">
    <property type="pathway name" value="TBC/RABGAPs"/>
</dbReference>
<dbReference type="Reactome" id="R-RNO-8873719">
    <property type="pathway name" value="RAB geranylgeranylation"/>
</dbReference>
<dbReference type="Reactome" id="R-RNO-8876198">
    <property type="pathway name" value="RAB GEFs exchange GTP for GDP on RABs"/>
</dbReference>
<dbReference type="PRO" id="PR:P70550"/>
<dbReference type="Proteomes" id="UP000002494">
    <property type="component" value="Chromosome 8"/>
</dbReference>
<dbReference type="Bgee" id="ENSRNOG00000018009">
    <property type="expression patterns" value="Expressed in spleen and 20 other cell types or tissues"/>
</dbReference>
<dbReference type="ExpressionAtlas" id="P70550">
    <property type="expression patterns" value="baseline and differential"/>
</dbReference>
<dbReference type="GO" id="GO:0051286">
    <property type="term" value="C:cell tip"/>
    <property type="evidence" value="ECO:0000314"/>
    <property type="project" value="RGD"/>
</dbReference>
<dbReference type="GO" id="GO:0005768">
    <property type="term" value="C:endosome"/>
    <property type="evidence" value="ECO:0000318"/>
    <property type="project" value="GO_Central"/>
</dbReference>
<dbReference type="GO" id="GO:0010008">
    <property type="term" value="C:endosome membrane"/>
    <property type="evidence" value="ECO:0000250"/>
    <property type="project" value="UniProtKB"/>
</dbReference>
<dbReference type="GO" id="GO:0048471">
    <property type="term" value="C:perinuclear region of cytoplasm"/>
    <property type="evidence" value="ECO:0000314"/>
    <property type="project" value="RGD"/>
</dbReference>
<dbReference type="GO" id="GO:0005778">
    <property type="term" value="C:peroxisomal membrane"/>
    <property type="evidence" value="ECO:0000266"/>
    <property type="project" value="RGD"/>
</dbReference>
<dbReference type="GO" id="GO:0045335">
    <property type="term" value="C:phagocytic vesicle"/>
    <property type="evidence" value="ECO:0000250"/>
    <property type="project" value="UniProtKB"/>
</dbReference>
<dbReference type="GO" id="GO:0030670">
    <property type="term" value="C:phagocytic vesicle membrane"/>
    <property type="evidence" value="ECO:0007669"/>
    <property type="project" value="UniProtKB-SubCell"/>
</dbReference>
<dbReference type="GO" id="GO:0005886">
    <property type="term" value="C:plasma membrane"/>
    <property type="evidence" value="ECO:0000318"/>
    <property type="project" value="GO_Central"/>
</dbReference>
<dbReference type="GO" id="GO:0098793">
    <property type="term" value="C:presynapse"/>
    <property type="evidence" value="ECO:0000314"/>
    <property type="project" value="SynGO"/>
</dbReference>
<dbReference type="GO" id="GO:0008021">
    <property type="term" value="C:synaptic vesicle"/>
    <property type="evidence" value="ECO:0000318"/>
    <property type="project" value="GO_Central"/>
</dbReference>
<dbReference type="GO" id="GO:0030140">
    <property type="term" value="C:trans-Golgi network transport vesicle"/>
    <property type="evidence" value="ECO:0000318"/>
    <property type="project" value="GO_Central"/>
</dbReference>
<dbReference type="GO" id="GO:0019003">
    <property type="term" value="F:GDP binding"/>
    <property type="evidence" value="ECO:0000250"/>
    <property type="project" value="UniProtKB"/>
</dbReference>
<dbReference type="GO" id="GO:0005525">
    <property type="term" value="F:GTP binding"/>
    <property type="evidence" value="ECO:0007669"/>
    <property type="project" value="UniProtKB-KW"/>
</dbReference>
<dbReference type="GO" id="GO:0003924">
    <property type="term" value="F:GTPase activity"/>
    <property type="evidence" value="ECO:0000318"/>
    <property type="project" value="GO_Central"/>
</dbReference>
<dbReference type="GO" id="GO:0005102">
    <property type="term" value="F:signaling receptor binding"/>
    <property type="evidence" value="ECO:0000266"/>
    <property type="project" value="RGD"/>
</dbReference>
<dbReference type="GO" id="GO:0030911">
    <property type="term" value="F:TPR domain binding"/>
    <property type="evidence" value="ECO:0000353"/>
    <property type="project" value="RGD"/>
</dbReference>
<dbReference type="GO" id="GO:0019882">
    <property type="term" value="P:antigen processing and presentation"/>
    <property type="evidence" value="ECO:0000266"/>
    <property type="project" value="RGD"/>
</dbReference>
<dbReference type="GO" id="GO:0150115">
    <property type="term" value="P:cell-substrate junction organization"/>
    <property type="evidence" value="ECO:0000314"/>
    <property type="project" value="UniProtKB"/>
</dbReference>
<dbReference type="GO" id="GO:0032456">
    <property type="term" value="P:endocytic recycling"/>
    <property type="evidence" value="ECO:0000318"/>
    <property type="project" value="GO_Central"/>
</dbReference>
<dbReference type="GO" id="GO:0006887">
    <property type="term" value="P:exocytosis"/>
    <property type="evidence" value="ECO:0000318"/>
    <property type="project" value="GO_Central"/>
</dbReference>
<dbReference type="GO" id="GO:0031346">
    <property type="term" value="P:positive regulation of cell projection organization"/>
    <property type="evidence" value="ECO:0000314"/>
    <property type="project" value="RGD"/>
</dbReference>
<dbReference type="GO" id="GO:0051461">
    <property type="term" value="P:positive regulation of corticotropin secretion"/>
    <property type="evidence" value="ECO:0000314"/>
    <property type="project" value="RGD"/>
</dbReference>
<dbReference type="GO" id="GO:0045046">
    <property type="term" value="P:protein import into peroxisome membrane"/>
    <property type="evidence" value="ECO:0000266"/>
    <property type="project" value="RGD"/>
</dbReference>
<dbReference type="CDD" id="cd01867">
    <property type="entry name" value="Rab8_Rab10_Rab13_like"/>
    <property type="match status" value="1"/>
</dbReference>
<dbReference type="FunFam" id="3.40.50.300:FF:000202">
    <property type="entry name" value="ras-related protein Rab-8A"/>
    <property type="match status" value="1"/>
</dbReference>
<dbReference type="Gene3D" id="3.40.50.300">
    <property type="entry name" value="P-loop containing nucleotide triphosphate hydrolases"/>
    <property type="match status" value="1"/>
</dbReference>
<dbReference type="InterPro" id="IPR027417">
    <property type="entry name" value="P-loop_NTPase"/>
</dbReference>
<dbReference type="InterPro" id="IPR005225">
    <property type="entry name" value="Small_GTP-bd"/>
</dbReference>
<dbReference type="InterPro" id="IPR001806">
    <property type="entry name" value="Small_GTPase"/>
</dbReference>
<dbReference type="InterPro" id="IPR050305">
    <property type="entry name" value="Small_GTPase_Rab"/>
</dbReference>
<dbReference type="NCBIfam" id="TIGR00231">
    <property type="entry name" value="small_GTP"/>
    <property type="match status" value="1"/>
</dbReference>
<dbReference type="PANTHER" id="PTHR47980">
    <property type="entry name" value="LD44762P"/>
    <property type="match status" value="1"/>
</dbReference>
<dbReference type="Pfam" id="PF00071">
    <property type="entry name" value="Ras"/>
    <property type="match status" value="1"/>
</dbReference>
<dbReference type="PRINTS" id="PR00449">
    <property type="entry name" value="RASTRNSFRMNG"/>
</dbReference>
<dbReference type="SMART" id="SM00177">
    <property type="entry name" value="ARF"/>
    <property type="match status" value="1"/>
</dbReference>
<dbReference type="SMART" id="SM00175">
    <property type="entry name" value="RAB"/>
    <property type="match status" value="1"/>
</dbReference>
<dbReference type="SMART" id="SM00176">
    <property type="entry name" value="RAN"/>
    <property type="match status" value="1"/>
</dbReference>
<dbReference type="SMART" id="SM00173">
    <property type="entry name" value="RAS"/>
    <property type="match status" value="1"/>
</dbReference>
<dbReference type="SMART" id="SM00174">
    <property type="entry name" value="RHO"/>
    <property type="match status" value="1"/>
</dbReference>
<dbReference type="SUPFAM" id="SSF52540">
    <property type="entry name" value="P-loop containing nucleoside triphosphate hydrolases"/>
    <property type="match status" value="1"/>
</dbReference>
<dbReference type="PROSITE" id="PS51419">
    <property type="entry name" value="RAB"/>
    <property type="match status" value="1"/>
</dbReference>
<sequence>MAKTYDYLFKLLLIGDSGVGKTCLLFRFSEDAFNTTFISTIGIDFKIRTIELDGKKIKLQIWDTAGQERFRTITTAYYRGAMGIMLVYDITNEKSFDNIKNWIRNIEEHASSDVERMILGNKCDMNDKRQVSKERGEKLAIDYGIKFLETSAKSSTNVEEAFFTLARDIMTKLNRKMNDSNSSGAGGPVKITESRSKKTSFFRCSLL</sequence>
<proteinExistence type="evidence at protein level"/>